<proteinExistence type="inferred from homology"/>
<dbReference type="EMBL" id="CH476661">
    <property type="protein sequence ID" value="EDN10484.1"/>
    <property type="molecule type" value="Genomic_DNA"/>
</dbReference>
<dbReference type="SMR" id="A6RBE9"/>
<dbReference type="STRING" id="339724.A6RBE9"/>
<dbReference type="KEGG" id="aje:HCAG_06287"/>
<dbReference type="VEuPathDB" id="FungiDB:HCAG_06287"/>
<dbReference type="HOGENOM" id="CLU_066912_0_0_1"/>
<dbReference type="OMA" id="KCMEEGT"/>
<dbReference type="OrthoDB" id="12344at299071"/>
<dbReference type="Proteomes" id="UP000009297">
    <property type="component" value="Unassembled WGS sequence"/>
</dbReference>
<dbReference type="GO" id="GO:0005730">
    <property type="term" value="C:nucleolus"/>
    <property type="evidence" value="ECO:0007669"/>
    <property type="project" value="UniProtKB-SubCell"/>
</dbReference>
<dbReference type="GO" id="GO:0030688">
    <property type="term" value="C:preribosome, small subunit precursor"/>
    <property type="evidence" value="ECO:0007669"/>
    <property type="project" value="TreeGrafter"/>
</dbReference>
<dbReference type="GO" id="GO:0000462">
    <property type="term" value="P:maturation of SSU-rRNA from tricistronic rRNA transcript (SSU-rRNA, 5.8S rRNA, LSU-rRNA)"/>
    <property type="evidence" value="ECO:0007669"/>
    <property type="project" value="TreeGrafter"/>
</dbReference>
<dbReference type="InterPro" id="IPR019310">
    <property type="entry name" value="Efg1"/>
</dbReference>
<dbReference type="InterPro" id="IPR050786">
    <property type="entry name" value="EFG1_rRNA-proc"/>
</dbReference>
<dbReference type="PANTHER" id="PTHR33911">
    <property type="entry name" value="RRNA-PROCESSING PROTEIN EFG1"/>
    <property type="match status" value="1"/>
</dbReference>
<dbReference type="PANTHER" id="PTHR33911:SF1">
    <property type="entry name" value="RRNA-PROCESSING PROTEIN EFG1"/>
    <property type="match status" value="1"/>
</dbReference>
<dbReference type="Pfam" id="PF10153">
    <property type="entry name" value="Efg1"/>
    <property type="match status" value="1"/>
</dbReference>
<gene>
    <name type="primary">EFG1</name>
    <name type="ORF">HCAG_06287</name>
</gene>
<evidence type="ECO:0000250" key="1"/>
<evidence type="ECO:0000255" key="2"/>
<evidence type="ECO:0000256" key="3">
    <source>
        <dbReference type="SAM" id="MobiDB-lite"/>
    </source>
</evidence>
<evidence type="ECO:0000305" key="4"/>
<feature type="chain" id="PRO_0000330257" description="rRNA-processing protein EFG1">
    <location>
        <begin position="1"/>
        <end position="370"/>
    </location>
</feature>
<feature type="region of interest" description="Disordered" evidence="3">
    <location>
        <begin position="1"/>
        <end position="107"/>
    </location>
</feature>
<feature type="region of interest" description="Disordered" evidence="3">
    <location>
        <begin position="228"/>
        <end position="256"/>
    </location>
</feature>
<feature type="region of interest" description="Disordered" evidence="3">
    <location>
        <begin position="280"/>
        <end position="370"/>
    </location>
</feature>
<feature type="coiled-coil region" evidence="2">
    <location>
        <begin position="132"/>
        <end position="189"/>
    </location>
</feature>
<feature type="compositionally biased region" description="Basic and acidic residues" evidence="3">
    <location>
        <begin position="44"/>
        <end position="59"/>
    </location>
</feature>
<feature type="compositionally biased region" description="Basic and acidic residues" evidence="3">
    <location>
        <begin position="313"/>
        <end position="338"/>
    </location>
</feature>
<feature type="compositionally biased region" description="Acidic residues" evidence="3">
    <location>
        <begin position="354"/>
        <end position="370"/>
    </location>
</feature>
<comment type="function">
    <text evidence="1">Involved in rRNA processing.</text>
</comment>
<comment type="subcellular location">
    <subcellularLocation>
        <location evidence="1">Nucleus</location>
        <location evidence="1">Nucleolus</location>
    </subcellularLocation>
</comment>
<comment type="similarity">
    <text evidence="4">Belongs to the EFG1 family.</text>
</comment>
<keyword id="KW-0175">Coiled coil</keyword>
<keyword id="KW-0539">Nucleus</keyword>
<keyword id="KW-1185">Reference proteome</keyword>
<keyword id="KW-0698">rRNA processing</keyword>
<sequence length="370" mass="42369">MASSSFQKQGKRKDMADDSISFETSKRHRGDYRNSREASPIVRDGQDDRRKYIDRREPGKQPSRPQIRDSNTFGGAQPGQDDHAYAAGRSTSKPFRSRDLDLPSANELKNKIRDTKRLLKRGDHLPADVRIEKERALVGYERDLEIVESRKNRAAMIKRYHFVRFLERKAATRRLNKLLKQKKTLTESNPNLDKKELDFVEEQIYVTQVDLNYAIYSPLTEKYISLYPNQRRDKKTPEPDPEDSNIIRNNSGEKPPLWYTVEQSMKDGTLELLRDGKLGIGISGQKTSNNGPIAVLGRKNNETVSGSSVATEGDSKQQGRKKDKEKQHDVKKSKEQEGSKNSGPRRRDVHMDDQNNEDGDDDSDGGFFEE</sequence>
<protein>
    <recommendedName>
        <fullName>rRNA-processing protein EFG1</fullName>
    </recommendedName>
</protein>
<name>EFG1P_AJECN</name>
<organism>
    <name type="scientific">Ajellomyces capsulatus (strain NAm1 / WU24)</name>
    <name type="common">Darling's disease fungus</name>
    <name type="synonym">Histoplasma capsulatum</name>
    <dbReference type="NCBI Taxonomy" id="2059318"/>
    <lineage>
        <taxon>Eukaryota</taxon>
        <taxon>Fungi</taxon>
        <taxon>Dikarya</taxon>
        <taxon>Ascomycota</taxon>
        <taxon>Pezizomycotina</taxon>
        <taxon>Eurotiomycetes</taxon>
        <taxon>Eurotiomycetidae</taxon>
        <taxon>Onygenales</taxon>
        <taxon>Ajellomycetaceae</taxon>
        <taxon>Histoplasma</taxon>
    </lineage>
</organism>
<reference key="1">
    <citation type="journal article" date="2009" name="Genome Res.">
        <title>Comparative genomic analyses of the human fungal pathogens Coccidioides and their relatives.</title>
        <authorList>
            <person name="Sharpton T.J."/>
            <person name="Stajich J.E."/>
            <person name="Rounsley S.D."/>
            <person name="Gardner M.J."/>
            <person name="Wortman J.R."/>
            <person name="Jordar V.S."/>
            <person name="Maiti R."/>
            <person name="Kodira C.D."/>
            <person name="Neafsey D.E."/>
            <person name="Zeng Q."/>
            <person name="Hung C.-Y."/>
            <person name="McMahan C."/>
            <person name="Muszewska A."/>
            <person name="Grynberg M."/>
            <person name="Mandel M.A."/>
            <person name="Kellner E.M."/>
            <person name="Barker B.M."/>
            <person name="Galgiani J.N."/>
            <person name="Orbach M.J."/>
            <person name="Kirkland T.N."/>
            <person name="Cole G.T."/>
            <person name="Henn M.R."/>
            <person name="Birren B.W."/>
            <person name="Taylor J.W."/>
        </authorList>
    </citation>
    <scope>NUCLEOTIDE SEQUENCE [LARGE SCALE GENOMIC DNA]</scope>
    <source>
        <strain>NAm1 / WU24</strain>
    </source>
</reference>
<accession>A6RBE9</accession>